<keyword id="KW-0002">3D-structure</keyword>
<keyword id="KW-0025">Alternative splicing</keyword>
<keyword id="KW-0175">Coiled coil</keyword>
<keyword id="KW-0344">Guanine-nucleotide releasing factor</keyword>
<keyword id="KW-0597">Phosphoprotein</keyword>
<keyword id="KW-0653">Protein transport</keyword>
<keyword id="KW-1267">Proteomics identification</keyword>
<keyword id="KW-1185">Reference proteome</keyword>
<keyword id="KW-0813">Transport</keyword>
<feature type="chain" id="PRO_0000305295" description="Guanine nucleotide exchange factor for Rab-3A">
    <location>
        <begin position="1"/>
        <end position="382"/>
    </location>
</feature>
<feature type="region of interest" description="Disordered" evidence="3">
    <location>
        <begin position="1"/>
        <end position="60"/>
    </location>
</feature>
<feature type="region of interest" description="Disordered" evidence="3">
    <location>
        <begin position="166"/>
        <end position="198"/>
    </location>
</feature>
<feature type="coiled-coil region" evidence="2">
    <location>
        <begin position="73"/>
        <end position="161"/>
    </location>
</feature>
<feature type="compositionally biased region" description="Pro residues" evidence="3">
    <location>
        <begin position="1"/>
        <end position="17"/>
    </location>
</feature>
<feature type="compositionally biased region" description="Low complexity" evidence="3">
    <location>
        <begin position="45"/>
        <end position="58"/>
    </location>
</feature>
<feature type="compositionally biased region" description="Basic residues" evidence="3">
    <location>
        <begin position="184"/>
        <end position="194"/>
    </location>
</feature>
<feature type="modified residue" description="Phosphoserine" evidence="7 8">
    <location>
        <position position="168"/>
    </location>
</feature>
<feature type="modified residue" description="Phosphoserine" evidence="7">
    <location>
        <position position="179"/>
    </location>
</feature>
<feature type="splice variant" id="VSP_028344" description="In isoform 2." evidence="5">
    <original>MWSG</original>
    <variation>MDSSEEHAGCPARGTCPVFLAMSAGTVRYAPSGLCPVLEGNLREEPWGTDS</variation>
    <location>
        <begin position="1"/>
        <end position="4"/>
    </location>
</feature>
<feature type="splice variant" id="VSP_028345" description="In isoform 2." evidence="5">
    <location>
        <begin position="147"/>
        <end position="219"/>
    </location>
</feature>
<feature type="sequence variant" id="VAR_035203" description="In dbSNP:rs174477.">
    <original>Q</original>
    <variation>R</variation>
    <location>
        <position position="49"/>
    </location>
</feature>
<feature type="sequence variant" id="VAR_035204" description="In dbSNP:rs3815045.">
    <original>H</original>
    <variation>Y</variation>
    <location>
        <position position="323"/>
    </location>
</feature>
<feature type="helix" evidence="9">
    <location>
        <begin position="80"/>
        <end position="146"/>
    </location>
</feature>
<proteinExistence type="evidence at protein level"/>
<comment type="function">
    <text evidence="4">Guanine nucleotide exchange factor (GEF) which may activate RAB3A, a GTPase that regulates synaptic vesicle exocytosis. Promotes the exchange of GDP to GTP, converting inactive GDP-bound Rab proteins into their active GTP-bound form. May also activate RAB8A and RAB8B.</text>
</comment>
<comment type="subunit">
    <text evidence="1">Interacts with RAB3A and IHPK1 through the coiled-coil domain. This interaction is competitive. IHPK1 kinase activity is not required for this interaction (By similarity).</text>
</comment>
<comment type="interaction">
    <interactant intactId="EBI-743796">
        <id>Q8TBN0</id>
    </interactant>
    <interactant intactId="EBI-725606">
        <id>Q9NWQ9</id>
        <label>C14orf119</label>
    </interactant>
    <organismsDiffer>false</organismsDiffer>
    <experiments>3</experiments>
</comment>
<comment type="interaction">
    <interactant intactId="EBI-743796">
        <id>Q8TBN0</id>
    </interactant>
    <interactant intactId="EBI-11603468">
        <id>Q2NKX9</id>
        <label>C2orf68</label>
    </interactant>
    <organismsDiffer>false</organismsDiffer>
    <experiments>3</experiments>
</comment>
<comment type="interaction">
    <interactant intactId="EBI-743796">
        <id>Q8TBN0</id>
    </interactant>
    <interactant intactId="EBI-2808286">
        <id>Q2TAC2</id>
        <label>CCDC57</label>
    </interactant>
    <organismsDiffer>false</organismsDiffer>
    <experiments>3</experiments>
</comment>
<comment type="interaction">
    <interactant intactId="EBI-743796">
        <id>Q8TBN0</id>
    </interactant>
    <interactant intactId="EBI-3866319">
        <id>Q9Y2V7</id>
        <label>COG6</label>
    </interactant>
    <organismsDiffer>false</organismsDiffer>
    <experiments>3</experiments>
</comment>
<comment type="interaction">
    <interactant intactId="EBI-743796">
        <id>Q8TBN0</id>
    </interactant>
    <interactant intactId="EBI-751587">
        <id>Q9GZU7</id>
        <label>CTDSP1</label>
    </interactant>
    <organismsDiffer>false</organismsDiffer>
    <experiments>3</experiments>
</comment>
<comment type="interaction">
    <interactant intactId="EBI-743796">
        <id>Q8TBN0</id>
    </interactant>
    <interactant intactId="EBI-3867333">
        <id>A8MQ03</id>
        <label>CYSRT1</label>
    </interactant>
    <organismsDiffer>false</organismsDiffer>
    <experiments>3</experiments>
</comment>
<comment type="interaction">
    <interactant intactId="EBI-743796">
        <id>Q8TBN0</id>
    </interactant>
    <interactant intactId="EBI-750641">
        <id>Q5TD97</id>
        <label>FHL5</label>
    </interactant>
    <organismsDiffer>false</organismsDiffer>
    <experiments>3</experiments>
</comment>
<comment type="interaction">
    <interactant intactId="EBI-743796">
        <id>Q8TBN0</id>
    </interactant>
    <interactant intactId="EBI-7116203">
        <id>O75031</id>
        <label>HSF2BP</label>
    </interactant>
    <organismsDiffer>false</organismsDiffer>
    <experiments>3</experiments>
</comment>
<comment type="interaction">
    <interactant intactId="EBI-743796">
        <id>Q8TBN0</id>
    </interactant>
    <interactant intactId="EBI-1047093">
        <id>O76011</id>
        <label>KRT34</label>
    </interactant>
    <organismsDiffer>false</organismsDiffer>
    <experiments>3</experiments>
</comment>
<comment type="interaction">
    <interactant intactId="EBI-743796">
        <id>Q8TBN0</id>
    </interactant>
    <interactant intactId="EBI-10171697">
        <id>Q6A162</id>
        <label>KRT40</label>
    </interactant>
    <organismsDiffer>false</organismsDiffer>
    <experiments>3</experiments>
</comment>
<comment type="interaction">
    <interactant intactId="EBI-743796">
        <id>Q8TBN0</id>
    </interactant>
    <interactant intactId="EBI-22311199">
        <id>Q3LI67</id>
        <label>KRTAP6-3</label>
    </interactant>
    <organismsDiffer>false</organismsDiffer>
    <experiments>3</experiments>
</comment>
<comment type="interaction">
    <interactant intactId="EBI-743796">
        <id>Q8TBN0</id>
    </interactant>
    <interactant intactId="EBI-742948">
        <id>Q5JR59</id>
        <label>MTUS2</label>
    </interactant>
    <organismsDiffer>false</organismsDiffer>
    <experiments>3</experiments>
</comment>
<comment type="interaction">
    <interactant intactId="EBI-743796">
        <id>Q8TBN0</id>
    </interactant>
    <interactant intactId="EBI-11522433">
        <id>Q5JR59-3</id>
        <label>MTUS2</label>
    </interactant>
    <organismsDiffer>false</organismsDiffer>
    <experiments>4</experiments>
</comment>
<comment type="interaction">
    <interactant intactId="EBI-743796">
        <id>Q8TBN0</id>
    </interactant>
    <interactant intactId="EBI-945833">
        <id>Q7Z3S9</id>
        <label>NOTCH2NLA</label>
    </interactant>
    <organismsDiffer>false</organismsDiffer>
    <experiments>4</experiments>
</comment>
<comment type="interaction">
    <interactant intactId="EBI-743796">
        <id>Q8TBN0</id>
    </interactant>
    <interactant intactId="EBI-22310682">
        <id>P0DPK4</id>
        <label>NOTCH2NLC</label>
    </interactant>
    <organismsDiffer>false</organismsDiffer>
    <experiments>3</experiments>
</comment>
<comment type="interaction">
    <interactant intactId="EBI-743796">
        <id>Q8TBN0</id>
    </interactant>
    <interactant intactId="EBI-740486">
        <id>Q6ZVK8</id>
        <label>NUDT18</label>
    </interactant>
    <organismsDiffer>false</organismsDiffer>
    <experiments>3</experiments>
</comment>
<comment type="interaction">
    <interactant intactId="EBI-743796">
        <id>Q8TBN0</id>
    </interactant>
    <interactant intactId="EBI-348380">
        <id>P25788</id>
        <label>PSMA3</label>
    </interactant>
    <organismsDiffer>false</organismsDiffer>
    <experiments>3</experiments>
</comment>
<comment type="interaction">
    <interactant intactId="EBI-743796">
        <id>Q8TBN0</id>
    </interactant>
    <interactant intactId="EBI-1045943">
        <id>P20336</id>
        <label>RAB3A</label>
    </interactant>
    <organismsDiffer>false</organismsDiffer>
    <experiments>3</experiments>
</comment>
<comment type="interaction">
    <interactant intactId="EBI-743796">
        <id>Q8TBN0</id>
    </interactant>
    <interactant intactId="EBI-743796">
        <id>Q8TBN0</id>
        <label>RAB3IL1</label>
    </interactant>
    <organismsDiffer>false</organismsDiffer>
    <experiments>3</experiments>
</comment>
<comment type="interaction">
    <interactant intactId="EBI-743796">
        <id>Q8TBN0</id>
    </interactant>
    <interactant intactId="EBI-747844">
        <id>Q96QF0</id>
        <label>RAB3IP</label>
    </interactant>
    <organismsDiffer>false</organismsDiffer>
    <experiments>12</experiments>
</comment>
<comment type="interaction">
    <interactant intactId="EBI-743796">
        <id>Q8TBN0</id>
    </interactant>
    <interactant intactId="EBI-8298169">
        <id>Q9UPW6</id>
        <label>SATB2</label>
    </interactant>
    <organismsDiffer>false</organismsDiffer>
    <experiments>3</experiments>
</comment>
<comment type="interaction">
    <interactant intactId="EBI-743796">
        <id>Q8TBN0</id>
    </interactant>
    <interactant intactId="EBI-712466">
        <id>Q16623</id>
        <label>STX1A</label>
    </interactant>
    <organismsDiffer>false</organismsDiffer>
    <experiments>3</experiments>
</comment>
<comment type="interaction">
    <interactant intactId="EBI-743796">
        <id>Q8TBN0</id>
    </interactant>
    <interactant intactId="EBI-3916512">
        <id>Q6NT04</id>
        <label>TIGD7</label>
    </interactant>
    <organismsDiffer>false</organismsDiffer>
    <experiments>3</experiments>
</comment>
<comment type="interaction">
    <interactant intactId="EBI-743796">
        <id>Q8TBN0</id>
    </interactant>
    <interactant intactId="EBI-12006098">
        <id>Q86TV6</id>
        <label>TTC7B</label>
    </interactant>
    <organismsDiffer>false</organismsDiffer>
    <experiments>3</experiments>
</comment>
<comment type="interaction">
    <interactant intactId="EBI-743796">
        <id>Q8TBN0</id>
    </interactant>
    <interactant intactId="EBI-25492395">
        <id>PRO_0000449633</id>
        <label>rep</label>
        <dbReference type="UniProtKB" id="P0DTD1"/>
    </interactant>
    <organismsDiffer>true</organismsDiffer>
    <experiments>3</experiments>
</comment>
<comment type="alternative products">
    <event type="alternative splicing"/>
    <isoform>
        <id>Q8TBN0-1</id>
        <name>1</name>
        <sequence type="displayed"/>
    </isoform>
    <isoform>
        <id>Q8TBN0-2</id>
        <name>2</name>
        <sequence type="described" ref="VSP_028344 VSP_028345"/>
    </isoform>
</comment>
<comment type="similarity">
    <text evidence="6">Belongs to the SEC2 family.</text>
</comment>
<accession>Q8TBN0</accession>
<accession>Q86V32</accession>
<accession>Q9P1Q8</accession>
<organism>
    <name type="scientific">Homo sapiens</name>
    <name type="common">Human</name>
    <dbReference type="NCBI Taxonomy" id="9606"/>
    <lineage>
        <taxon>Eukaryota</taxon>
        <taxon>Metazoa</taxon>
        <taxon>Chordata</taxon>
        <taxon>Craniata</taxon>
        <taxon>Vertebrata</taxon>
        <taxon>Euteleostomi</taxon>
        <taxon>Mammalia</taxon>
        <taxon>Eutheria</taxon>
        <taxon>Euarchontoglires</taxon>
        <taxon>Primates</taxon>
        <taxon>Haplorrhini</taxon>
        <taxon>Catarrhini</taxon>
        <taxon>Hominidae</taxon>
        <taxon>Homo</taxon>
    </lineage>
</organism>
<dbReference type="EMBL" id="BC022239">
    <property type="protein sequence ID" value="AAH22239.1"/>
    <property type="molecule type" value="mRNA"/>
</dbReference>
<dbReference type="EMBL" id="BC051820">
    <property type="protein sequence ID" value="AAH51820.1"/>
    <property type="molecule type" value="mRNA"/>
</dbReference>
<dbReference type="EMBL" id="AF084557">
    <property type="protein sequence ID" value="AAF28399.1"/>
    <property type="molecule type" value="mRNA"/>
</dbReference>
<dbReference type="CCDS" id="CCDS60809.1">
    <molecule id="Q8TBN0-2"/>
</dbReference>
<dbReference type="CCDS" id="CCDS8014.1">
    <molecule id="Q8TBN0-1"/>
</dbReference>
<dbReference type="RefSeq" id="NP_001258615.1">
    <molecule id="Q8TBN0-2"/>
    <property type="nucleotide sequence ID" value="NM_001271686.2"/>
</dbReference>
<dbReference type="RefSeq" id="NP_037533.2">
    <molecule id="Q8TBN0-1"/>
    <property type="nucleotide sequence ID" value="NM_013401.3"/>
</dbReference>
<dbReference type="PDB" id="4LI0">
    <property type="method" value="X-ray"/>
    <property type="resolution" value="3.30 A"/>
    <property type="chains" value="C/D/E/F=73-154"/>
</dbReference>
<dbReference type="PDBsum" id="4LI0"/>
<dbReference type="SMR" id="Q8TBN0"/>
<dbReference type="BioGRID" id="111804">
    <property type="interactions" value="65"/>
</dbReference>
<dbReference type="FunCoup" id="Q8TBN0">
    <property type="interactions" value="100"/>
</dbReference>
<dbReference type="IntAct" id="Q8TBN0">
    <property type="interactions" value="46"/>
</dbReference>
<dbReference type="STRING" id="9606.ENSP00000378313"/>
<dbReference type="iPTMnet" id="Q8TBN0"/>
<dbReference type="PhosphoSitePlus" id="Q8TBN0"/>
<dbReference type="BioMuta" id="RAB3IL1"/>
<dbReference type="DMDM" id="74730489"/>
<dbReference type="jPOST" id="Q8TBN0"/>
<dbReference type="MassIVE" id="Q8TBN0"/>
<dbReference type="PaxDb" id="9606-ENSP00000378313"/>
<dbReference type="PeptideAtlas" id="Q8TBN0"/>
<dbReference type="ProteomicsDB" id="74033">
    <molecule id="Q8TBN0-1"/>
</dbReference>
<dbReference type="ProteomicsDB" id="74034">
    <molecule id="Q8TBN0-2"/>
</dbReference>
<dbReference type="Pumba" id="Q8TBN0"/>
<dbReference type="Antibodypedia" id="28364">
    <property type="antibodies" value="185 antibodies from 20 providers"/>
</dbReference>
<dbReference type="DNASU" id="5866"/>
<dbReference type="Ensembl" id="ENST00000301773.9">
    <molecule id="Q8TBN0-2"/>
    <property type="protein sequence ID" value="ENSP00000301773.5"/>
    <property type="gene ID" value="ENSG00000167994.13"/>
</dbReference>
<dbReference type="Ensembl" id="ENST00000394836.7">
    <molecule id="Q8TBN0-1"/>
    <property type="protein sequence ID" value="ENSP00000378313.2"/>
    <property type="gene ID" value="ENSG00000167994.13"/>
</dbReference>
<dbReference type="GeneID" id="5866"/>
<dbReference type="KEGG" id="hsa:5866"/>
<dbReference type="MANE-Select" id="ENST00000394836.7">
    <property type="protein sequence ID" value="ENSP00000378313.2"/>
    <property type="RefSeq nucleotide sequence ID" value="NM_013401.4"/>
    <property type="RefSeq protein sequence ID" value="NP_037533.2"/>
</dbReference>
<dbReference type="UCSC" id="uc001nso.5">
    <molecule id="Q8TBN0-1"/>
    <property type="organism name" value="human"/>
</dbReference>
<dbReference type="AGR" id="HGNC:9780"/>
<dbReference type="CTD" id="5866"/>
<dbReference type="DisGeNET" id="5866"/>
<dbReference type="GeneCards" id="RAB3IL1"/>
<dbReference type="HGNC" id="HGNC:9780">
    <property type="gene designation" value="RAB3IL1"/>
</dbReference>
<dbReference type="HPA" id="ENSG00000167994">
    <property type="expression patterns" value="Low tissue specificity"/>
</dbReference>
<dbReference type="MIM" id="621025">
    <property type="type" value="gene"/>
</dbReference>
<dbReference type="neXtProt" id="NX_Q8TBN0"/>
<dbReference type="OpenTargets" id="ENSG00000167994"/>
<dbReference type="PharmGKB" id="PA34135"/>
<dbReference type="VEuPathDB" id="HostDB:ENSG00000167994"/>
<dbReference type="eggNOG" id="KOG4324">
    <property type="taxonomic scope" value="Eukaryota"/>
</dbReference>
<dbReference type="GeneTree" id="ENSGT00940000159102"/>
<dbReference type="HOGENOM" id="CLU_038204_1_0_1"/>
<dbReference type="InParanoid" id="Q8TBN0"/>
<dbReference type="OrthoDB" id="5560525at2759"/>
<dbReference type="PAN-GO" id="Q8TBN0">
    <property type="GO annotations" value="2 GO annotations based on evolutionary models"/>
</dbReference>
<dbReference type="PhylomeDB" id="Q8TBN0"/>
<dbReference type="TreeFam" id="TF313748"/>
<dbReference type="PathwayCommons" id="Q8TBN0"/>
<dbReference type="Reactome" id="R-HSA-8876198">
    <property type="pathway name" value="RAB GEFs exchange GTP for GDP on RABs"/>
</dbReference>
<dbReference type="SignaLink" id="Q8TBN0"/>
<dbReference type="SIGNOR" id="Q8TBN0"/>
<dbReference type="BioGRID-ORCS" id="5866">
    <property type="hits" value="16 hits in 1159 CRISPR screens"/>
</dbReference>
<dbReference type="ChiTaRS" id="RAB3IL1">
    <property type="organism name" value="human"/>
</dbReference>
<dbReference type="EvolutionaryTrace" id="Q8TBN0"/>
<dbReference type="GenomeRNAi" id="5866"/>
<dbReference type="Pharos" id="Q8TBN0">
    <property type="development level" value="Tbio"/>
</dbReference>
<dbReference type="PRO" id="PR:Q8TBN0"/>
<dbReference type="Proteomes" id="UP000005640">
    <property type="component" value="Chromosome 11"/>
</dbReference>
<dbReference type="RNAct" id="Q8TBN0">
    <property type="molecule type" value="protein"/>
</dbReference>
<dbReference type="Bgee" id="ENSG00000167994">
    <property type="expression patterns" value="Expressed in type B pancreatic cell and 163 other cell types or tissues"/>
</dbReference>
<dbReference type="ExpressionAtlas" id="Q8TBN0">
    <property type="expression patterns" value="baseline and differential"/>
</dbReference>
<dbReference type="GO" id="GO:0005829">
    <property type="term" value="C:cytosol"/>
    <property type="evidence" value="ECO:0000304"/>
    <property type="project" value="Reactome"/>
</dbReference>
<dbReference type="GO" id="GO:0005085">
    <property type="term" value="F:guanyl-nucleotide exchange factor activity"/>
    <property type="evidence" value="ECO:0000314"/>
    <property type="project" value="UniProtKB"/>
</dbReference>
<dbReference type="GO" id="GO:0042802">
    <property type="term" value="F:identical protein binding"/>
    <property type="evidence" value="ECO:0000353"/>
    <property type="project" value="IntAct"/>
</dbReference>
<dbReference type="GO" id="GO:0015031">
    <property type="term" value="P:protein transport"/>
    <property type="evidence" value="ECO:0007669"/>
    <property type="project" value="UniProtKB-KW"/>
</dbReference>
<dbReference type="CDD" id="cd21069">
    <property type="entry name" value="Rab11BD_RAB3IL1"/>
    <property type="match status" value="1"/>
</dbReference>
<dbReference type="FunFam" id="1.20.5.4880:FF:000001">
    <property type="entry name" value="Guanine nucleotide exchange factor for Rab-3A"/>
    <property type="match status" value="1"/>
</dbReference>
<dbReference type="Gene3D" id="1.20.5.4880">
    <property type="match status" value="1"/>
</dbReference>
<dbReference type="InterPro" id="IPR040351">
    <property type="entry name" value="RAB3IL/RAB3IP/Sec2"/>
</dbReference>
<dbReference type="InterPro" id="IPR009449">
    <property type="entry name" value="Sec2_N"/>
</dbReference>
<dbReference type="PANTHER" id="PTHR14430:SF5">
    <property type="entry name" value="GUANINE NUCLEOTIDE EXCHANGE FACTOR FOR RAB-3A"/>
    <property type="match status" value="1"/>
</dbReference>
<dbReference type="PANTHER" id="PTHR14430">
    <property type="entry name" value="RABIN3-RELATED"/>
    <property type="match status" value="1"/>
</dbReference>
<dbReference type="Pfam" id="PF06428">
    <property type="entry name" value="Sec2p"/>
    <property type="match status" value="1"/>
</dbReference>
<dbReference type="SUPFAM" id="SSF144284">
    <property type="entry name" value="Sec2 N-terminal region"/>
    <property type="match status" value="1"/>
</dbReference>
<protein>
    <recommendedName>
        <fullName>Guanine nucleotide exchange factor for Rab-3A</fullName>
    </recommendedName>
    <alternativeName>
        <fullName>Rab-3A-interacting-like protein 1</fullName>
        <shortName>Rab3A-interacting-like protein 1</shortName>
    </alternativeName>
    <alternativeName>
        <fullName>Rabin3-like 1</fullName>
    </alternativeName>
</protein>
<sequence>MWSGPPQPDQGLPPPLAAVPVPWKSTDPCQGHRESPGALVETSAGEEAQGQEGPAAAQLDVLRLRSSSMEIREKGSEFLKEELHRAQKELKLKDEECERLSKVREQLEQELEELTASLFEEAHKMVREANMKQAASEKQLKEARGKIDMLQAEVTALKTLVITSTPASPNRELHPQLLSPTKAGPRKGHSRHKSTSSTLCPAVCPAAGHTLTPDREGKEVDTILFAEFQAWRESPTLDKTCPFLERVYREDVGPCLDFTMQELSVLVRAAVEDNTLTIEPVASQTLPTVKVAEVDCSSTNTCALSGLTRTCRHRIRLGDSKSHYYISPSSRARITAVCNFFTYIRYIQQGLVRQDAEPMFWEIMRLRKEMSLAKLGFFPQEA</sequence>
<reference key="1">
    <citation type="journal article" date="2004" name="Genome Res.">
        <title>The status, quality, and expansion of the NIH full-length cDNA project: the Mammalian Gene Collection (MGC).</title>
        <authorList>
            <consortium name="The MGC Project Team"/>
        </authorList>
    </citation>
    <scope>NUCLEOTIDE SEQUENCE [LARGE SCALE MRNA] (ISOFORMS 1 AND 2)</scope>
    <source>
        <tissue>Bone</tissue>
        <tissue>Colon</tissue>
    </source>
</reference>
<reference key="2">
    <citation type="submission" date="1998-08" db="EMBL/GenBank/DDBJ databases">
        <title>Genomic characterization of eight novel genes from within the former Best's disease candidate region in 11q12-q13.1.</title>
        <authorList>
            <person name="Marquardt A."/>
            <person name="Stoehr H."/>
            <person name="Passmore L.A."/>
            <person name="Kraemer F."/>
            <person name="Rivera A."/>
            <person name="Weber B.H.F."/>
        </authorList>
    </citation>
    <scope>NUCLEOTIDE SEQUENCE [MRNA] OF 69-382 (ISOFORM 1)</scope>
</reference>
<reference key="3">
    <citation type="journal article" date="2008" name="Proc. Natl. Acad. Sci. U.S.A.">
        <title>A quantitative atlas of mitotic phosphorylation.</title>
        <authorList>
            <person name="Dephoure N."/>
            <person name="Zhou C."/>
            <person name="Villen J."/>
            <person name="Beausoleil S.A."/>
            <person name="Bakalarski C.E."/>
            <person name="Elledge S.J."/>
            <person name="Gygi S.P."/>
        </authorList>
    </citation>
    <scope>IDENTIFICATION BY MASS SPECTROMETRY [LARGE SCALE ANALYSIS]</scope>
    <source>
        <tissue>Cervix carcinoma</tissue>
    </source>
</reference>
<reference key="4">
    <citation type="journal article" date="2010" name="J. Cell Biol.">
        <title>Family-wide characterization of the DENN domain Rab GDP-GTP exchange factors.</title>
        <authorList>
            <person name="Yoshimura S."/>
            <person name="Gerondopoulos A."/>
            <person name="Linford A."/>
            <person name="Rigden D.J."/>
            <person name="Barr F.A."/>
        </authorList>
    </citation>
    <scope>FUNCTION AS GUANYL-NUCLEOTIDE EXCHANGE FACTOR</scope>
</reference>
<reference key="5">
    <citation type="journal article" date="2013" name="J. Proteome Res.">
        <title>Toward a comprehensive characterization of a human cancer cell phosphoproteome.</title>
        <authorList>
            <person name="Zhou H."/>
            <person name="Di Palma S."/>
            <person name="Preisinger C."/>
            <person name="Peng M."/>
            <person name="Polat A.N."/>
            <person name="Heck A.J."/>
            <person name="Mohammed S."/>
        </authorList>
    </citation>
    <scope>PHOSPHORYLATION [LARGE SCALE ANALYSIS] AT SER-168 AND SER-179</scope>
    <scope>IDENTIFICATION BY MASS SPECTROMETRY [LARGE SCALE ANALYSIS]</scope>
    <source>
        <tissue>Cervix carcinoma</tissue>
        <tissue>Erythroleukemia</tissue>
    </source>
</reference>
<reference key="6">
    <citation type="journal article" date="2014" name="J. Proteomics">
        <title>An enzyme assisted RP-RPLC approach for in-depth analysis of human liver phosphoproteome.</title>
        <authorList>
            <person name="Bian Y."/>
            <person name="Song C."/>
            <person name="Cheng K."/>
            <person name="Dong M."/>
            <person name="Wang F."/>
            <person name="Huang J."/>
            <person name="Sun D."/>
            <person name="Wang L."/>
            <person name="Ye M."/>
            <person name="Zou H."/>
        </authorList>
    </citation>
    <scope>PHOSPHORYLATION [LARGE SCALE ANALYSIS] AT SER-168</scope>
    <scope>IDENTIFICATION BY MASS SPECTROMETRY [LARGE SCALE ANALYSIS]</scope>
    <source>
        <tissue>Liver</tissue>
    </source>
</reference>
<gene>
    <name type="primary">RAB3IL1</name>
</gene>
<name>R3GEF_HUMAN</name>
<evidence type="ECO:0000250" key="1"/>
<evidence type="ECO:0000255" key="2"/>
<evidence type="ECO:0000256" key="3">
    <source>
        <dbReference type="SAM" id="MobiDB-lite"/>
    </source>
</evidence>
<evidence type="ECO:0000269" key="4">
    <source>
    </source>
</evidence>
<evidence type="ECO:0000303" key="5">
    <source>
    </source>
</evidence>
<evidence type="ECO:0000305" key="6"/>
<evidence type="ECO:0007744" key="7">
    <source>
    </source>
</evidence>
<evidence type="ECO:0007744" key="8">
    <source>
    </source>
</evidence>
<evidence type="ECO:0007829" key="9">
    <source>
        <dbReference type="PDB" id="4LI0"/>
    </source>
</evidence>